<evidence type="ECO:0000250" key="1">
    <source>
        <dbReference type="UniProtKB" id="P34080"/>
    </source>
</evidence>
<evidence type="ECO:0000250" key="2">
    <source>
        <dbReference type="UniProtKB" id="P41181"/>
    </source>
</evidence>
<evidence type="ECO:0000303" key="3">
    <source>
    </source>
</evidence>
<evidence type="ECO:0000305" key="4"/>
<gene>
    <name evidence="2" type="primary">AQP2</name>
</gene>
<protein>
    <recommendedName>
        <fullName evidence="3">Aquaporin-2</fullName>
        <shortName>AQP-2</shortName>
    </recommendedName>
    <alternativeName>
        <fullName>ADH water channel</fullName>
    </alternativeName>
    <alternativeName>
        <fullName>Aquaporin-CD</fullName>
        <shortName>AQP-CD</shortName>
    </alternativeName>
    <alternativeName>
        <fullName>Collecting duct water channel protein</fullName>
    </alternativeName>
    <alternativeName>
        <fullName>WCH-CD</fullName>
    </alternativeName>
    <alternativeName>
        <fullName>Water channel protein for renal collecting duct</fullName>
    </alternativeName>
</protein>
<feature type="chain" id="PRO_0000063929" description="Aquaporin-2">
    <location>
        <begin position="1" status="less than"/>
        <end position="109" status="greater than"/>
    </location>
</feature>
<feature type="topological domain" description="Cytoplasmic" evidence="4">
    <location>
        <begin position="1" status="less than"/>
        <end position="6"/>
    </location>
</feature>
<feature type="transmembrane region" description="Helical" evidence="2">
    <location>
        <begin position="7"/>
        <end position="27"/>
    </location>
</feature>
<feature type="topological domain" description="Extracellular" evidence="4">
    <location>
        <begin position="28"/>
        <end position="35"/>
    </location>
</feature>
<feature type="transmembrane region" description="Helical" evidence="2">
    <location>
        <begin position="36"/>
        <end position="54"/>
    </location>
</feature>
<feature type="topological domain" description="Cytoplasmic" evidence="4">
    <location>
        <begin position="55"/>
        <end position="59"/>
    </location>
</feature>
<feature type="intramembrane region" description="Discontinuously helical" evidence="2">
    <location>
        <begin position="60"/>
        <end position="69"/>
    </location>
</feature>
<feature type="topological domain" description="Cytoplasmic" evidence="4">
    <location>
        <begin position="70"/>
        <end position="80"/>
    </location>
</feature>
<feature type="transmembrane region" description="Helical" evidence="2">
    <location>
        <begin position="81"/>
        <end position="102"/>
    </location>
</feature>
<feature type="topological domain" description="Extracellular" evidence="4">
    <location>
        <begin position="103"/>
        <end position="109" status="greater than"/>
    </location>
</feature>
<feature type="short sequence motif" description="NPA 1" evidence="2">
    <location>
        <begin position="63"/>
        <end position="65"/>
    </location>
</feature>
<feature type="non-terminal residue">
    <location>
        <position position="1"/>
    </location>
</feature>
<feature type="non-terminal residue">
    <location>
        <position position="109"/>
    </location>
</feature>
<keyword id="KW-1003">Cell membrane</keyword>
<keyword id="KW-0968">Cytoplasmic vesicle</keyword>
<keyword id="KW-0325">Glycoprotein</keyword>
<keyword id="KW-0333">Golgi apparatus</keyword>
<keyword id="KW-0472">Membrane</keyword>
<keyword id="KW-0597">Phosphoprotein</keyword>
<keyword id="KW-0812">Transmembrane</keyword>
<keyword id="KW-1133">Transmembrane helix</keyword>
<keyword id="KW-0813">Transport</keyword>
<reference key="1">
    <citation type="journal article" date="1997" name="Mol. Biol. Evol.">
        <title>Molecular evolution of mammalian aquaporin-2: further evidence that elephant shrew and aardvark join the paenungulate clade.</title>
        <authorList>
            <person name="Madsen O.J."/>
            <person name="Deen P.M.T."/>
            <person name="Pesole G."/>
            <person name="Saccone C."/>
            <person name="de Jong W.W."/>
        </authorList>
    </citation>
    <scope>NUCLEOTIDE SEQUENCE [GENOMIC DNA]</scope>
</reference>
<organism>
    <name type="scientific">Dasypus novemcinctus</name>
    <name type="common">Nine-banded armadillo</name>
    <dbReference type="NCBI Taxonomy" id="9361"/>
    <lineage>
        <taxon>Eukaryota</taxon>
        <taxon>Metazoa</taxon>
        <taxon>Chordata</taxon>
        <taxon>Craniata</taxon>
        <taxon>Vertebrata</taxon>
        <taxon>Euteleostomi</taxon>
        <taxon>Mammalia</taxon>
        <taxon>Eutheria</taxon>
        <taxon>Xenarthra</taxon>
        <taxon>Cingulata</taxon>
        <taxon>Dasypodidae</taxon>
        <taxon>Dasypus</taxon>
    </lineage>
</organism>
<sequence>SVAFSRAVLAEFLATLIFVFFGLGSALSWPQALPSVLQIALAFGLAIGTLVQALGHVSGAHINPAVTVACLVGCHVSFLRAAFYVAAQLLGAVAGAAILHEITPPDVRG</sequence>
<dbReference type="EMBL" id="Y10637">
    <property type="protein sequence ID" value="CAA71662.1"/>
    <property type="molecule type" value="Genomic_DNA"/>
</dbReference>
<dbReference type="SMR" id="P79164"/>
<dbReference type="GO" id="GO:0016324">
    <property type="term" value="C:apical plasma membrane"/>
    <property type="evidence" value="ECO:0000250"/>
    <property type="project" value="UniProtKB"/>
</dbReference>
<dbReference type="GO" id="GO:0016323">
    <property type="term" value="C:basolateral plasma membrane"/>
    <property type="evidence" value="ECO:0007669"/>
    <property type="project" value="UniProtKB-SubCell"/>
</dbReference>
<dbReference type="GO" id="GO:0030659">
    <property type="term" value="C:cytoplasmic vesicle membrane"/>
    <property type="evidence" value="ECO:0007669"/>
    <property type="project" value="UniProtKB-SubCell"/>
</dbReference>
<dbReference type="GO" id="GO:0005794">
    <property type="term" value="C:Golgi apparatus"/>
    <property type="evidence" value="ECO:0007669"/>
    <property type="project" value="UniProtKB-SubCell"/>
</dbReference>
<dbReference type="GO" id="GO:0005886">
    <property type="term" value="C:plasma membrane"/>
    <property type="evidence" value="ECO:0000250"/>
    <property type="project" value="UniProtKB"/>
</dbReference>
<dbReference type="GO" id="GO:0015250">
    <property type="term" value="F:water channel activity"/>
    <property type="evidence" value="ECO:0000250"/>
    <property type="project" value="UniProtKB"/>
</dbReference>
<dbReference type="GO" id="GO:0051289">
    <property type="term" value="P:protein homotetramerization"/>
    <property type="evidence" value="ECO:0000250"/>
    <property type="project" value="UniProtKB"/>
</dbReference>
<dbReference type="GO" id="GO:0006833">
    <property type="term" value="P:water transport"/>
    <property type="evidence" value="ECO:0000250"/>
    <property type="project" value="UniProtKB"/>
</dbReference>
<dbReference type="FunFam" id="1.20.1080.10:FF:000032">
    <property type="entry name" value="Aquaporin-2"/>
    <property type="match status" value="1"/>
</dbReference>
<dbReference type="Gene3D" id="1.20.1080.10">
    <property type="entry name" value="Glycerol uptake facilitator protein"/>
    <property type="match status" value="1"/>
</dbReference>
<dbReference type="InterPro" id="IPR023271">
    <property type="entry name" value="Aquaporin-like"/>
</dbReference>
<dbReference type="InterPro" id="IPR034294">
    <property type="entry name" value="Aquaporin_transptr"/>
</dbReference>
<dbReference type="InterPro" id="IPR000425">
    <property type="entry name" value="MIP"/>
</dbReference>
<dbReference type="InterPro" id="IPR022357">
    <property type="entry name" value="MIP_CS"/>
</dbReference>
<dbReference type="PANTHER" id="PTHR19139">
    <property type="entry name" value="AQUAPORIN TRANSPORTER"/>
    <property type="match status" value="1"/>
</dbReference>
<dbReference type="PANTHER" id="PTHR19139:SF45">
    <property type="entry name" value="AQUAPORIN-2"/>
    <property type="match status" value="1"/>
</dbReference>
<dbReference type="Pfam" id="PF00230">
    <property type="entry name" value="MIP"/>
    <property type="match status" value="1"/>
</dbReference>
<dbReference type="PRINTS" id="PR02014">
    <property type="entry name" value="AQUAPORIN2"/>
</dbReference>
<dbReference type="PRINTS" id="PR00783">
    <property type="entry name" value="MINTRINSICP"/>
</dbReference>
<dbReference type="SUPFAM" id="SSF81338">
    <property type="entry name" value="Aquaporin-like"/>
    <property type="match status" value="1"/>
</dbReference>
<dbReference type="PROSITE" id="PS00221">
    <property type="entry name" value="MIP"/>
    <property type="match status" value="1"/>
</dbReference>
<name>AQP2_DASNO</name>
<accession>P79164</accession>
<comment type="function">
    <text evidence="2">Forms a water-specific channel that provides the plasma membranes of renal collecting duct with high permeability to water, thereby permitting water to move in the direction of an osmotic gradient. Plays an essential role in renal water homeostasis. Could also be permeable to glycerol.</text>
</comment>
<comment type="catalytic activity">
    <reaction evidence="2">
        <text>H2O(in) = H2O(out)</text>
        <dbReference type="Rhea" id="RHEA:29667"/>
        <dbReference type="ChEBI" id="CHEBI:15377"/>
    </reaction>
</comment>
<comment type="catalytic activity">
    <reaction evidence="2">
        <text>glycerol(in) = glycerol(out)</text>
        <dbReference type="Rhea" id="RHEA:29675"/>
        <dbReference type="ChEBI" id="CHEBI:17754"/>
    </reaction>
</comment>
<comment type="subunit">
    <text evidence="2">Homotetramer.</text>
</comment>
<comment type="subcellular location">
    <subcellularLocation>
        <location evidence="2">Apical cell membrane</location>
        <topology evidence="2">Multi-pass membrane protein</topology>
    </subcellularLocation>
    <subcellularLocation>
        <location evidence="1">Basolateral cell membrane</location>
        <topology evidence="2">Multi-pass membrane protein</topology>
    </subcellularLocation>
    <subcellularLocation>
        <location evidence="2">Cell membrane</location>
        <topology evidence="2">Multi-pass membrane protein</topology>
    </subcellularLocation>
    <subcellularLocation>
        <location evidence="2">Cytoplasmic vesicle membrane</location>
        <topology evidence="2">Multi-pass membrane protein</topology>
    </subcellularLocation>
    <subcellularLocation>
        <location evidence="2">Golgi apparatus</location>
        <location evidence="2">trans-Golgi network membrane</location>
        <topology evidence="2">Multi-pass membrane protein</topology>
    </subcellularLocation>
    <text evidence="2">Shuttles from vesicles to the apical membrane. Vasopressin-regulated phosphorylation is required for translocation to the apical cell membrane. PLEKHA8/FAPP2 is required to transport AQP2 from the TGN to sites where AQP2 is phosphorylated.</text>
</comment>
<comment type="domain">
    <text evidence="2">Aquaporins contain two tandem repeats each containing three membrane-spanning domains and a pore-forming loop with the signature motif Asn-Pro-Ala (NPA).</text>
</comment>
<comment type="PTM">
    <text evidence="2">Serine phosphorylation is necessary and sufficient for expression at the apical membrane. Endocytosis is not phosphorylation-dependent.</text>
</comment>
<comment type="PTM">
    <text evidence="2">N-glycosylated.</text>
</comment>
<comment type="similarity">
    <text evidence="4">Belongs to the MIP/aquaporin (TC 1.A.8) family.</text>
</comment>
<proteinExistence type="inferred from homology"/>